<comment type="similarity">
    <text evidence="1">Belongs to the SfsA family.</text>
</comment>
<reference key="1">
    <citation type="journal article" date="1999" name="Nature">
        <title>Evidence for lateral gene transfer between Archaea and Bacteria from genome sequence of Thermotoga maritima.</title>
        <authorList>
            <person name="Nelson K.E."/>
            <person name="Clayton R.A."/>
            <person name="Gill S.R."/>
            <person name="Gwinn M.L."/>
            <person name="Dodson R.J."/>
            <person name="Haft D.H."/>
            <person name="Hickey E.K."/>
            <person name="Peterson J.D."/>
            <person name="Nelson W.C."/>
            <person name="Ketchum K.A."/>
            <person name="McDonald L.A."/>
            <person name="Utterback T.R."/>
            <person name="Malek J.A."/>
            <person name="Linher K.D."/>
            <person name="Garrett M.M."/>
            <person name="Stewart A.M."/>
            <person name="Cotton M.D."/>
            <person name="Pratt M.S."/>
            <person name="Phillips C.A."/>
            <person name="Richardson D.L."/>
            <person name="Heidelberg J.F."/>
            <person name="Sutton G.G."/>
            <person name="Fleischmann R.D."/>
            <person name="Eisen J.A."/>
            <person name="White O."/>
            <person name="Salzberg S.L."/>
            <person name="Smith H.O."/>
            <person name="Venter J.C."/>
            <person name="Fraser C.M."/>
        </authorList>
    </citation>
    <scope>NUCLEOTIDE SEQUENCE [LARGE SCALE GENOMIC DNA]</scope>
    <source>
        <strain>ATCC 43589 / DSM 3109 / JCM 10099 / NBRC 100826 / MSB8</strain>
    </source>
</reference>
<keyword id="KW-1185">Reference proteome</keyword>
<dbReference type="EMBL" id="AE000512">
    <property type="protein sequence ID" value="AAD35650.1"/>
    <property type="molecule type" value="Genomic_DNA"/>
</dbReference>
<dbReference type="PIR" id="D72361">
    <property type="entry name" value="D72361"/>
</dbReference>
<dbReference type="RefSeq" id="NP_228375.1">
    <property type="nucleotide sequence ID" value="NC_000853.1"/>
</dbReference>
<dbReference type="RefSeq" id="WP_004081303.1">
    <property type="nucleotide sequence ID" value="NZ_CP011107.1"/>
</dbReference>
<dbReference type="SMR" id="Q9WZ35"/>
<dbReference type="STRING" id="243274.TM_0565"/>
<dbReference type="PaxDb" id="243274-THEMA_01845"/>
<dbReference type="EnsemblBacteria" id="AAD35650">
    <property type="protein sequence ID" value="AAD35650"/>
    <property type="gene ID" value="TM_0565"/>
</dbReference>
<dbReference type="KEGG" id="tma:TM0565"/>
<dbReference type="KEGG" id="tmi:THEMA_01845"/>
<dbReference type="KEGG" id="tmm:Tmari_0563"/>
<dbReference type="KEGG" id="tmw:THMA_0579"/>
<dbReference type="eggNOG" id="COG1489">
    <property type="taxonomic scope" value="Bacteria"/>
</dbReference>
<dbReference type="InParanoid" id="Q9WZ35"/>
<dbReference type="OrthoDB" id="9802365at2"/>
<dbReference type="Proteomes" id="UP000008183">
    <property type="component" value="Chromosome"/>
</dbReference>
<dbReference type="GO" id="GO:0003677">
    <property type="term" value="F:DNA binding"/>
    <property type="evidence" value="ECO:0000318"/>
    <property type="project" value="GO_Central"/>
</dbReference>
<dbReference type="CDD" id="cd22357">
    <property type="entry name" value="SfsA-like"/>
    <property type="match status" value="1"/>
</dbReference>
<dbReference type="FunFam" id="2.40.50.580:FF:000002">
    <property type="entry name" value="Sugar fermentation stimulation protein homolog"/>
    <property type="match status" value="1"/>
</dbReference>
<dbReference type="FunFam" id="3.40.1350.60:FF:000003">
    <property type="entry name" value="Sugar fermentation stimulation protein homolog"/>
    <property type="match status" value="1"/>
</dbReference>
<dbReference type="Gene3D" id="2.40.50.580">
    <property type="match status" value="1"/>
</dbReference>
<dbReference type="Gene3D" id="3.40.1350.60">
    <property type="match status" value="1"/>
</dbReference>
<dbReference type="HAMAP" id="MF_00095">
    <property type="entry name" value="SfsA"/>
    <property type="match status" value="1"/>
</dbReference>
<dbReference type="InterPro" id="IPR005224">
    <property type="entry name" value="SfsA"/>
</dbReference>
<dbReference type="InterPro" id="IPR040452">
    <property type="entry name" value="SfsA_C"/>
</dbReference>
<dbReference type="InterPro" id="IPR041465">
    <property type="entry name" value="SfsA_N"/>
</dbReference>
<dbReference type="NCBIfam" id="TIGR00230">
    <property type="entry name" value="sfsA"/>
    <property type="match status" value="1"/>
</dbReference>
<dbReference type="PANTHER" id="PTHR30545">
    <property type="entry name" value="SUGAR FERMENTATION STIMULATION PROTEIN A"/>
    <property type="match status" value="1"/>
</dbReference>
<dbReference type="PANTHER" id="PTHR30545:SF2">
    <property type="entry name" value="SUGAR FERMENTATION STIMULATION PROTEIN A"/>
    <property type="match status" value="1"/>
</dbReference>
<dbReference type="Pfam" id="PF03749">
    <property type="entry name" value="SfsA"/>
    <property type="match status" value="1"/>
</dbReference>
<dbReference type="Pfam" id="PF17746">
    <property type="entry name" value="SfsA_N"/>
    <property type="match status" value="1"/>
</dbReference>
<sequence length="222" mass="25436">MRLILPADTEGIFLERKSRFTGVALVEGKKTLIHIHNTGRLPLLKKGKRVLLKRAESDRRKTGWDLLAVEHRNEFVFVHSGFHSIVAGKILEELFPGSTIESEKRFENSRFDFLIDRRTFVEVKGCTYEEDGVAMFPDAPTGRGRRHIEELIRSVKSGFKALLLILVFLESDCFLPNRSVDPAFSEIFWRALNSGVNIDVFRVKYDGEYLCSTEKLSICEEV</sequence>
<organism>
    <name type="scientific">Thermotoga maritima (strain ATCC 43589 / DSM 3109 / JCM 10099 / NBRC 100826 / MSB8)</name>
    <dbReference type="NCBI Taxonomy" id="243274"/>
    <lineage>
        <taxon>Bacteria</taxon>
        <taxon>Thermotogati</taxon>
        <taxon>Thermotogota</taxon>
        <taxon>Thermotogae</taxon>
        <taxon>Thermotogales</taxon>
        <taxon>Thermotogaceae</taxon>
        <taxon>Thermotoga</taxon>
    </lineage>
</organism>
<accession>Q9WZ35</accession>
<feature type="chain" id="PRO_0000152313" description="Sugar fermentation stimulation protein homolog">
    <location>
        <begin position="1"/>
        <end position="222"/>
    </location>
</feature>
<evidence type="ECO:0000255" key="1">
    <source>
        <dbReference type="HAMAP-Rule" id="MF_00095"/>
    </source>
</evidence>
<protein>
    <recommendedName>
        <fullName evidence="1">Sugar fermentation stimulation protein homolog</fullName>
    </recommendedName>
</protein>
<name>SFSA_THEMA</name>
<proteinExistence type="inferred from homology"/>
<gene>
    <name evidence="1" type="primary">sfsA</name>
    <name type="ordered locus">TM_0565</name>
</gene>